<evidence type="ECO:0000255" key="1">
    <source>
        <dbReference type="HAMAP-Rule" id="MF_01151"/>
    </source>
</evidence>
<evidence type="ECO:0000256" key="2">
    <source>
        <dbReference type="SAM" id="MobiDB-lite"/>
    </source>
</evidence>
<comment type="function">
    <text evidence="1">Participates actively in the response to hyperosmotic and heat shock by preventing the aggregation of stress-denatured proteins, in association with DnaK and GrpE. It is the nucleotide exchange factor for DnaK and may function as a thermosensor. Unfolded proteins bind initially to DnaJ; upon interaction with the DnaJ-bound protein, DnaK hydrolyzes its bound ATP, resulting in the formation of a stable complex. GrpE releases ADP from DnaK; ATP binding to DnaK triggers the release of the substrate protein, thus completing the reaction cycle. Several rounds of ATP-dependent interactions between DnaJ, DnaK and GrpE are required for fully efficient folding.</text>
</comment>
<comment type="subunit">
    <text evidence="1">Homodimer.</text>
</comment>
<comment type="subcellular location">
    <subcellularLocation>
        <location evidence="1">Cytoplasm</location>
    </subcellularLocation>
</comment>
<comment type="similarity">
    <text evidence="1">Belongs to the GrpE family.</text>
</comment>
<organism>
    <name type="scientific">Nitrosomonas eutropha (strain DSM 101675 / C91 / Nm57)</name>
    <dbReference type="NCBI Taxonomy" id="335283"/>
    <lineage>
        <taxon>Bacteria</taxon>
        <taxon>Pseudomonadati</taxon>
        <taxon>Pseudomonadota</taxon>
        <taxon>Betaproteobacteria</taxon>
        <taxon>Nitrosomonadales</taxon>
        <taxon>Nitrosomonadaceae</taxon>
        <taxon>Nitrosomonas</taxon>
    </lineage>
</organism>
<accession>Q0AIY2</accession>
<sequence>MQEPHNQEPIEEQKLSEMEDTLEKQHSGASTENTERAEEGVVIPDLEQQLKEAEIRAAEHHDAWLRAKAETENIRKRAQTDIANAHKYAIDNFATQLLAVMDSLDAALAVENSTIESLKDGVELTRKQLAAVFEKFNIHTINPQGEKFDPHQHEAMCTVESDIPPNTVTQVMQKGYVLHERVIRPAMVAVSKAKST</sequence>
<gene>
    <name evidence="1" type="primary">grpE</name>
    <name type="ordered locus">Neut_0411</name>
</gene>
<dbReference type="EMBL" id="CP000450">
    <property type="protein sequence ID" value="ABI58689.1"/>
    <property type="molecule type" value="Genomic_DNA"/>
</dbReference>
<dbReference type="RefSeq" id="WP_011633531.1">
    <property type="nucleotide sequence ID" value="NC_008344.1"/>
</dbReference>
<dbReference type="SMR" id="Q0AIY2"/>
<dbReference type="STRING" id="335283.Neut_0411"/>
<dbReference type="KEGG" id="net:Neut_0411"/>
<dbReference type="eggNOG" id="COG0576">
    <property type="taxonomic scope" value="Bacteria"/>
</dbReference>
<dbReference type="HOGENOM" id="CLU_057217_6_1_4"/>
<dbReference type="OrthoDB" id="9789811at2"/>
<dbReference type="Proteomes" id="UP000001966">
    <property type="component" value="Chromosome"/>
</dbReference>
<dbReference type="GO" id="GO:0005829">
    <property type="term" value="C:cytosol"/>
    <property type="evidence" value="ECO:0007669"/>
    <property type="project" value="TreeGrafter"/>
</dbReference>
<dbReference type="GO" id="GO:0000774">
    <property type="term" value="F:adenyl-nucleotide exchange factor activity"/>
    <property type="evidence" value="ECO:0007669"/>
    <property type="project" value="InterPro"/>
</dbReference>
<dbReference type="GO" id="GO:0042803">
    <property type="term" value="F:protein homodimerization activity"/>
    <property type="evidence" value="ECO:0007669"/>
    <property type="project" value="InterPro"/>
</dbReference>
<dbReference type="GO" id="GO:0051087">
    <property type="term" value="F:protein-folding chaperone binding"/>
    <property type="evidence" value="ECO:0007669"/>
    <property type="project" value="InterPro"/>
</dbReference>
<dbReference type="GO" id="GO:0051082">
    <property type="term" value="F:unfolded protein binding"/>
    <property type="evidence" value="ECO:0007669"/>
    <property type="project" value="TreeGrafter"/>
</dbReference>
<dbReference type="GO" id="GO:0006457">
    <property type="term" value="P:protein folding"/>
    <property type="evidence" value="ECO:0007669"/>
    <property type="project" value="InterPro"/>
</dbReference>
<dbReference type="CDD" id="cd00446">
    <property type="entry name" value="GrpE"/>
    <property type="match status" value="1"/>
</dbReference>
<dbReference type="FunFam" id="2.30.22.10:FF:000001">
    <property type="entry name" value="Protein GrpE"/>
    <property type="match status" value="1"/>
</dbReference>
<dbReference type="Gene3D" id="3.90.20.20">
    <property type="match status" value="1"/>
</dbReference>
<dbReference type="Gene3D" id="2.30.22.10">
    <property type="entry name" value="Head domain of nucleotide exchange factor GrpE"/>
    <property type="match status" value="1"/>
</dbReference>
<dbReference type="HAMAP" id="MF_01151">
    <property type="entry name" value="GrpE"/>
    <property type="match status" value="1"/>
</dbReference>
<dbReference type="InterPro" id="IPR000740">
    <property type="entry name" value="GrpE"/>
</dbReference>
<dbReference type="InterPro" id="IPR013805">
    <property type="entry name" value="GrpE_coiled_coil"/>
</dbReference>
<dbReference type="InterPro" id="IPR009012">
    <property type="entry name" value="GrpE_head"/>
</dbReference>
<dbReference type="NCBIfam" id="NF010737">
    <property type="entry name" value="PRK14139.1"/>
    <property type="match status" value="1"/>
</dbReference>
<dbReference type="NCBIfam" id="NF010738">
    <property type="entry name" value="PRK14140.1"/>
    <property type="match status" value="1"/>
</dbReference>
<dbReference type="NCBIfam" id="NF010748">
    <property type="entry name" value="PRK14150.1"/>
    <property type="match status" value="1"/>
</dbReference>
<dbReference type="PANTHER" id="PTHR21237">
    <property type="entry name" value="GRPE PROTEIN"/>
    <property type="match status" value="1"/>
</dbReference>
<dbReference type="PANTHER" id="PTHR21237:SF23">
    <property type="entry name" value="GRPE PROTEIN HOMOLOG, MITOCHONDRIAL"/>
    <property type="match status" value="1"/>
</dbReference>
<dbReference type="Pfam" id="PF01025">
    <property type="entry name" value="GrpE"/>
    <property type="match status" value="1"/>
</dbReference>
<dbReference type="PRINTS" id="PR00773">
    <property type="entry name" value="GRPEPROTEIN"/>
</dbReference>
<dbReference type="SUPFAM" id="SSF58014">
    <property type="entry name" value="Coiled-coil domain of nucleotide exchange factor GrpE"/>
    <property type="match status" value="1"/>
</dbReference>
<dbReference type="SUPFAM" id="SSF51064">
    <property type="entry name" value="Head domain of nucleotide exchange factor GrpE"/>
    <property type="match status" value="1"/>
</dbReference>
<dbReference type="PROSITE" id="PS01071">
    <property type="entry name" value="GRPE"/>
    <property type="match status" value="1"/>
</dbReference>
<proteinExistence type="inferred from homology"/>
<protein>
    <recommendedName>
        <fullName evidence="1">Protein GrpE</fullName>
    </recommendedName>
    <alternativeName>
        <fullName evidence="1">HSP-70 cofactor</fullName>
    </alternativeName>
</protein>
<name>GRPE_NITEC</name>
<reference key="1">
    <citation type="journal article" date="2007" name="Environ. Microbiol.">
        <title>Whole-genome analysis of the ammonia-oxidizing bacterium, Nitrosomonas eutropha C91: implications for niche adaptation.</title>
        <authorList>
            <person name="Stein L.Y."/>
            <person name="Arp D.J."/>
            <person name="Berube P.M."/>
            <person name="Chain P.S."/>
            <person name="Hauser L."/>
            <person name="Jetten M.S."/>
            <person name="Klotz M.G."/>
            <person name="Larimer F.W."/>
            <person name="Norton J.M."/>
            <person name="Op den Camp H.J.M."/>
            <person name="Shin M."/>
            <person name="Wei X."/>
        </authorList>
    </citation>
    <scope>NUCLEOTIDE SEQUENCE [LARGE SCALE GENOMIC DNA]</scope>
    <source>
        <strain>DSM 101675 / C91 / Nm57</strain>
    </source>
</reference>
<keyword id="KW-0143">Chaperone</keyword>
<keyword id="KW-0963">Cytoplasm</keyword>
<keyword id="KW-0346">Stress response</keyword>
<feature type="chain" id="PRO_1000053608" description="Protein GrpE">
    <location>
        <begin position="1"/>
        <end position="196"/>
    </location>
</feature>
<feature type="region of interest" description="Disordered" evidence="2">
    <location>
        <begin position="1"/>
        <end position="40"/>
    </location>
</feature>
<feature type="compositionally biased region" description="Basic and acidic residues" evidence="2">
    <location>
        <begin position="1"/>
        <end position="26"/>
    </location>
</feature>